<dbReference type="SMR" id="P85938"/>
<dbReference type="Gene3D" id="1.20.190.20">
    <property type="entry name" value="14-3-3 domain"/>
    <property type="match status" value="1"/>
</dbReference>
<dbReference type="InterPro" id="IPR036815">
    <property type="entry name" value="14-3-3_dom_sf"/>
</dbReference>
<dbReference type="InterPro" id="IPR023410">
    <property type="entry name" value="14-3-3_domain"/>
</dbReference>
<dbReference type="SMART" id="SM00101">
    <property type="entry name" value="14_3_3"/>
    <property type="match status" value="1"/>
</dbReference>
<dbReference type="SUPFAM" id="SSF48445">
    <property type="entry name" value="14-3-3 protein"/>
    <property type="match status" value="1"/>
</dbReference>
<comment type="similarity">
    <text evidence="2">Belongs to the 14-3-3 family.</text>
</comment>
<organism>
    <name type="scientific">Pseudotsuga menziesii</name>
    <name type="common">Douglas-fir</name>
    <name type="synonym">Abies menziesii</name>
    <dbReference type="NCBI Taxonomy" id="3357"/>
    <lineage>
        <taxon>Eukaryota</taxon>
        <taxon>Viridiplantae</taxon>
        <taxon>Streptophyta</taxon>
        <taxon>Embryophyta</taxon>
        <taxon>Tracheophyta</taxon>
        <taxon>Spermatophyta</taxon>
        <taxon>Pinopsida</taxon>
        <taxon>Pinidae</taxon>
        <taxon>Conifers I</taxon>
        <taxon>Pinales</taxon>
        <taxon>Pinaceae</taxon>
        <taxon>Pseudotsuga</taxon>
    </lineage>
</organism>
<protein>
    <recommendedName>
        <fullName evidence="1">14-3-3-like protein 1</fullName>
    </recommendedName>
</protein>
<reference key="1">
    <citation type="journal article" date="2008" name="J. Proteomics">
        <title>A proteomics approach to identify proteins differentially expressed in Douglas-fir seedlings infected by Phellinus sulphurascens.</title>
        <authorList>
            <person name="Islam M.A."/>
            <person name="Sturrock R.N."/>
            <person name="Ekramoddoullah A.K.M."/>
        </authorList>
    </citation>
    <scope>IDENTIFICATION BY MASS SPECTROMETRY</scope>
</reference>
<feature type="chain" id="PRO_0000347314" description="14-3-3-like protein 1">
    <location>
        <begin position="1" status="less than"/>
        <end position="80" status="greater than"/>
    </location>
</feature>
<feature type="non-consecutive residues" evidence="3">
    <location>
        <begin position="10"/>
        <end position="11"/>
    </location>
</feature>
<feature type="non-consecutive residues" evidence="3">
    <location>
        <begin position="18"/>
        <end position="19"/>
    </location>
</feature>
<feature type="non-consecutive residues" evidence="3">
    <location>
        <begin position="30"/>
        <end position="31"/>
    </location>
</feature>
<feature type="non-consecutive residues" evidence="3">
    <location>
        <begin position="53"/>
        <end position="54"/>
    </location>
</feature>
<feature type="non-consecutive residues" evidence="3">
    <location>
        <begin position="70"/>
        <end position="71"/>
    </location>
</feature>
<feature type="non-terminal residue" evidence="3">
    <location>
        <position position="1"/>
    </location>
</feature>
<feature type="non-terminal residue" evidence="3">
    <location>
        <position position="80"/>
    </location>
</feature>
<evidence type="ECO:0000250" key="1">
    <source>
        <dbReference type="UniProtKB" id="Q9SP07"/>
    </source>
</evidence>
<evidence type="ECO:0000255" key="2"/>
<evidence type="ECO:0000303" key="3">
    <source>
    </source>
</evidence>
<sequence length="80" mass="8974">YEEMVEFMEKNLLSVAYKIISSIEQKEESRICEGILRLLDSHLIPSSTAAESKSAQDIAAAELAPTHPIRDSTLIMQLLR</sequence>
<proteinExistence type="evidence at protein level"/>
<name>14331_PSEMZ</name>
<accession>P85938</accession>